<gene>
    <name evidence="5" type="primary">lnbC</name>
    <name type="ORF">AFLA_121500</name>
</gene>
<organism>
    <name type="scientific">Aspergillus flavus (strain ATCC 200026 / FGSC A1120 / IAM 13836 / NRRL 3357 / JCM 12722 / SRRC 167)</name>
    <dbReference type="NCBI Taxonomy" id="332952"/>
    <lineage>
        <taxon>Eukaryota</taxon>
        <taxon>Fungi</taxon>
        <taxon>Dikarya</taxon>
        <taxon>Ascomycota</taxon>
        <taxon>Pezizomycotina</taxon>
        <taxon>Eurotiomycetes</taxon>
        <taxon>Eurotiomycetidae</taxon>
        <taxon>Eurotiales</taxon>
        <taxon>Aspergillaceae</taxon>
        <taxon>Aspergillus</taxon>
        <taxon>Aspergillus subgen. Circumdati</taxon>
    </lineage>
</organism>
<dbReference type="EC" id="1.-.-.-" evidence="7"/>
<dbReference type="EMBL" id="EQ963485">
    <property type="protein sequence ID" value="EED45921.1"/>
    <property type="molecule type" value="Genomic_DNA"/>
</dbReference>
<dbReference type="RefSeq" id="XP_002384857.1">
    <property type="nucleotide sequence ID" value="XM_002384816.1"/>
</dbReference>
<dbReference type="SMR" id="B8NWW3"/>
<dbReference type="STRING" id="332952.B8NWW3"/>
<dbReference type="GlyCosmos" id="B8NWW3">
    <property type="glycosylation" value="2 sites, No reported glycans"/>
</dbReference>
<dbReference type="EnsemblFungi" id="EED45921">
    <property type="protein sequence ID" value="EED45921"/>
    <property type="gene ID" value="AFLA_121500"/>
</dbReference>
<dbReference type="VEuPathDB" id="FungiDB:AFLA_014153"/>
<dbReference type="eggNOG" id="KOG0158">
    <property type="taxonomic scope" value="Eukaryota"/>
</dbReference>
<dbReference type="HOGENOM" id="CLU_001570_14_11_1"/>
<dbReference type="OMA" id="ACYPDAN"/>
<dbReference type="GO" id="GO:0016020">
    <property type="term" value="C:membrane"/>
    <property type="evidence" value="ECO:0007669"/>
    <property type="project" value="UniProtKB-SubCell"/>
</dbReference>
<dbReference type="GO" id="GO:0020037">
    <property type="term" value="F:heme binding"/>
    <property type="evidence" value="ECO:0007669"/>
    <property type="project" value="InterPro"/>
</dbReference>
<dbReference type="GO" id="GO:0005506">
    <property type="term" value="F:iron ion binding"/>
    <property type="evidence" value="ECO:0007669"/>
    <property type="project" value="InterPro"/>
</dbReference>
<dbReference type="GO" id="GO:0004497">
    <property type="term" value="F:monooxygenase activity"/>
    <property type="evidence" value="ECO:0007669"/>
    <property type="project" value="UniProtKB-KW"/>
</dbReference>
<dbReference type="GO" id="GO:0016705">
    <property type="term" value="F:oxidoreductase activity, acting on paired donors, with incorporation or reduction of molecular oxygen"/>
    <property type="evidence" value="ECO:0007669"/>
    <property type="project" value="InterPro"/>
</dbReference>
<dbReference type="GO" id="GO:0009058">
    <property type="term" value="P:biosynthetic process"/>
    <property type="evidence" value="ECO:0007669"/>
    <property type="project" value="UniProtKB-ARBA"/>
</dbReference>
<dbReference type="CDD" id="cd11058">
    <property type="entry name" value="CYP60B-like"/>
    <property type="match status" value="1"/>
</dbReference>
<dbReference type="Gene3D" id="1.10.630.10">
    <property type="entry name" value="Cytochrome P450"/>
    <property type="match status" value="1"/>
</dbReference>
<dbReference type="InterPro" id="IPR001128">
    <property type="entry name" value="Cyt_P450"/>
</dbReference>
<dbReference type="InterPro" id="IPR017972">
    <property type="entry name" value="Cyt_P450_CS"/>
</dbReference>
<dbReference type="InterPro" id="IPR002401">
    <property type="entry name" value="Cyt_P450_E_grp-I"/>
</dbReference>
<dbReference type="InterPro" id="IPR036396">
    <property type="entry name" value="Cyt_P450_sf"/>
</dbReference>
<dbReference type="InterPro" id="IPR050121">
    <property type="entry name" value="Cytochrome_P450_monoxygenase"/>
</dbReference>
<dbReference type="PANTHER" id="PTHR24305">
    <property type="entry name" value="CYTOCHROME P450"/>
    <property type="match status" value="1"/>
</dbReference>
<dbReference type="PANTHER" id="PTHR24305:SF210">
    <property type="entry name" value="CYTOCHROME P450 MONOOXYGENASE ASQL-RELATED"/>
    <property type="match status" value="1"/>
</dbReference>
<dbReference type="Pfam" id="PF00067">
    <property type="entry name" value="p450"/>
    <property type="match status" value="1"/>
</dbReference>
<dbReference type="PRINTS" id="PR00463">
    <property type="entry name" value="EP450I"/>
</dbReference>
<dbReference type="PRINTS" id="PR00385">
    <property type="entry name" value="P450"/>
</dbReference>
<dbReference type="SUPFAM" id="SSF48264">
    <property type="entry name" value="Cytochrome P450"/>
    <property type="match status" value="1"/>
</dbReference>
<dbReference type="PROSITE" id="PS00086">
    <property type="entry name" value="CYTOCHROME_P450"/>
    <property type="match status" value="1"/>
</dbReference>
<comment type="function">
    <text evidence="4">Cytochrome P450 monooxygenase; part of the lnb gene cluster that mediates the biosynthesis of diastereomeric piperazines. Lna and lnb clusters encode sets of enzymes that produce overlapping sets of previously undescribed metabolites such as piperazinomycin-like metabolites or morpholine (PubMed:23281040). The lna and lnb biosynthetic pathways appear to be part of a signaling network that controls the formation of sclerotia, a resilient overwintering structure (PubMed:23281040). One primary function of the non-canonical nonribosomal peptide synthetases lnaA and lnbA consists in the reduction of L-tyrosine (PubMed:23281040). The presence in the clusters of tailoring enzymes such as the oxidoreductases lnaB, lnbB, lnaE or lnbE, as well as of the cytochrome P450 monooxygenases lnaC, lnaD, or lnbC, might explain formation of various diastereomeric piperazines (PubMed:23281040).</text>
</comment>
<comment type="cofactor">
    <cofactor evidence="1">
        <name>heme</name>
        <dbReference type="ChEBI" id="CHEBI:30413"/>
    </cofactor>
</comment>
<comment type="pathway">
    <text evidence="7">Secondary metabolite biosynthesis.</text>
</comment>
<comment type="subcellular location">
    <subcellularLocation>
        <location evidence="2">Membrane</location>
        <topology evidence="2">Single-pass membrane protein</topology>
    </subcellularLocation>
</comment>
<comment type="similarity">
    <text evidence="6">Belongs to the cytochrome P450 family.</text>
</comment>
<evidence type="ECO:0000250" key="1">
    <source>
        <dbReference type="UniProtKB" id="P04798"/>
    </source>
</evidence>
<evidence type="ECO:0000255" key="2"/>
<evidence type="ECO:0000255" key="3">
    <source>
        <dbReference type="PROSITE-ProRule" id="PRU00498"/>
    </source>
</evidence>
<evidence type="ECO:0000269" key="4">
    <source>
    </source>
</evidence>
<evidence type="ECO:0000303" key="5">
    <source>
    </source>
</evidence>
<evidence type="ECO:0000305" key="6"/>
<evidence type="ECO:0000305" key="7">
    <source>
    </source>
</evidence>
<keyword id="KW-0325">Glycoprotein</keyword>
<keyword id="KW-0349">Heme</keyword>
<keyword id="KW-0408">Iron</keyword>
<keyword id="KW-0472">Membrane</keyword>
<keyword id="KW-0479">Metal-binding</keyword>
<keyword id="KW-0503">Monooxygenase</keyword>
<keyword id="KW-0560">Oxidoreductase</keyword>
<keyword id="KW-0812">Transmembrane</keyword>
<keyword id="KW-1133">Transmembrane helix</keyword>
<reference key="1">
    <citation type="journal article" date="2015" name="Genome Announc.">
        <title>Genome sequence of Aspergillus flavus NRRL 3357, a strain that causes aflatoxin contamination of food and feed.</title>
        <authorList>
            <person name="Nierman W.C."/>
            <person name="Yu J."/>
            <person name="Fedorova-Abrams N.D."/>
            <person name="Losada L."/>
            <person name="Cleveland T.E."/>
            <person name="Bhatnagar D."/>
            <person name="Bennett J.W."/>
            <person name="Dean R."/>
            <person name="Payne G.A."/>
        </authorList>
    </citation>
    <scope>NUCLEOTIDE SEQUENCE [LARGE SCALE GENOMIC DNA]</scope>
    <source>
        <strain>ATCC 200026 / FGSC A1120 / IAM 13836 / NRRL 3357 / JCM 12722 / SRRC 167</strain>
    </source>
</reference>
<reference key="2">
    <citation type="journal article" date="2013" name="Angew. Chem. Int. Ed.">
        <title>Homologous NRPS-like gene clusters mediate redundant small-molecule biosynthesis in Aspergillus flavus.</title>
        <authorList>
            <person name="Forseth R.R."/>
            <person name="Amaike S."/>
            <person name="Schwenk D."/>
            <person name="Affeldt K.J."/>
            <person name="Hoffmeister D."/>
            <person name="Schroeder F.C."/>
            <person name="Keller N.P."/>
        </authorList>
    </citation>
    <scope>IDENTIFICATION</scope>
    <scope>FUNCTION</scope>
    <scope>PATHWAY</scope>
</reference>
<name>LNBC_ASPFN</name>
<accession>B8NWW3</accession>
<sequence length="503" mass="56609">MAARLLSSVSLTDVVLLLSSVWIAVHLVLAAYNVYLHPLRRYPGPKLAAASQLLNVYHVLKGDNCKWTAQLHEKYGTVVRIGPNELSYISPSANQTIFGGRPKEDKVFEKNPVAYLQGNGDISNIFFARFHDHNRLRKLMAPAFSETAVREQEATIQGYTNQLIAALRNRSGQAAYPDAKGVVNIIPWLHFILFDVLTRLSFGDPIGCLDRADYHPWVSVIFKAIIHSTYTQAAHRLAPYQWILKHFIPNDMTANYEAHLEFTRKQLDQRQQVKEEPVARADFSSFMLKGMSPDELFDNVNIVITAGGETTASTISSSLYYLVHNPSSYERLTKEIRDTFSAEGEITLAAVAALPYLKAVIQEAMRIHPPVPIGLFRVAPAAGAFIDGQWVPGNTWVSVANLAASRSPTYWRDPERFTPERWLGDAKYESDVREASAPFSIGTRNCIGLNLANANMRIILARLLWNFDFEAQPDNIDPHELDEYGIWETKPLNLKIKERVQTT</sequence>
<feature type="chain" id="PRO_0000446079" description="Cytochrome P450 monooxygenase lnbC">
    <location>
        <begin position="1"/>
        <end position="503"/>
    </location>
</feature>
<feature type="transmembrane region" description="Helical" evidence="2">
    <location>
        <begin position="14"/>
        <end position="34"/>
    </location>
</feature>
<feature type="binding site" description="axial binding residue" evidence="1">
    <location>
        <position position="446"/>
    </location>
    <ligand>
        <name>heme</name>
        <dbReference type="ChEBI" id="CHEBI:30413"/>
    </ligand>
    <ligandPart>
        <name>Fe</name>
        <dbReference type="ChEBI" id="CHEBI:18248"/>
    </ligandPart>
</feature>
<feature type="glycosylation site" description="N-linked (GlcNAc...) asparagine" evidence="3">
    <location>
        <position position="94"/>
    </location>
</feature>
<feature type="glycosylation site" description="N-linked (GlcNAc...) asparagine" evidence="3">
    <location>
        <position position="169"/>
    </location>
</feature>
<protein>
    <recommendedName>
        <fullName evidence="5">Cytochrome P450 monooxygenase lnbC</fullName>
        <ecNumber evidence="7">1.-.-.-</ecNumber>
    </recommendedName>
    <alternativeName>
        <fullName evidence="5">Lnb diastereomeric piperazines biosynthesis cluster protein C</fullName>
    </alternativeName>
</protein>
<proteinExistence type="inferred from homology"/>